<name>SYFA_GLUDA</name>
<organism>
    <name type="scientific">Gluconacetobacter diazotrophicus (strain ATCC 49037 / DSM 5601 / CCUG 37298 / CIP 103539 / LMG 7603 / PAl5)</name>
    <dbReference type="NCBI Taxonomy" id="272568"/>
    <lineage>
        <taxon>Bacteria</taxon>
        <taxon>Pseudomonadati</taxon>
        <taxon>Pseudomonadota</taxon>
        <taxon>Alphaproteobacteria</taxon>
        <taxon>Acetobacterales</taxon>
        <taxon>Acetobacteraceae</taxon>
        <taxon>Gluconacetobacter</taxon>
    </lineage>
</organism>
<dbReference type="EC" id="6.1.1.20" evidence="1"/>
<dbReference type="EMBL" id="AM889285">
    <property type="protein sequence ID" value="CAP57215.1"/>
    <property type="molecule type" value="Genomic_DNA"/>
</dbReference>
<dbReference type="EMBL" id="CP001189">
    <property type="protein sequence ID" value="ACI52823.1"/>
    <property type="molecule type" value="Genomic_DNA"/>
</dbReference>
<dbReference type="RefSeq" id="WP_012227750.1">
    <property type="nucleotide sequence ID" value="NC_010125.1"/>
</dbReference>
<dbReference type="RefSeq" id="WP_012554750.1">
    <property type="nucleotide sequence ID" value="NC_011365.1"/>
</dbReference>
<dbReference type="SMR" id="A9H167"/>
<dbReference type="STRING" id="272568.GDI3272"/>
<dbReference type="KEGG" id="gdi:GDI3272"/>
<dbReference type="KEGG" id="gdj:Gdia_3093"/>
<dbReference type="eggNOG" id="COG0016">
    <property type="taxonomic scope" value="Bacteria"/>
</dbReference>
<dbReference type="HOGENOM" id="CLU_025086_0_1_5"/>
<dbReference type="OrthoDB" id="9800719at2"/>
<dbReference type="Proteomes" id="UP000001176">
    <property type="component" value="Chromosome"/>
</dbReference>
<dbReference type="GO" id="GO:0005737">
    <property type="term" value="C:cytoplasm"/>
    <property type="evidence" value="ECO:0007669"/>
    <property type="project" value="UniProtKB-SubCell"/>
</dbReference>
<dbReference type="GO" id="GO:0005524">
    <property type="term" value="F:ATP binding"/>
    <property type="evidence" value="ECO:0007669"/>
    <property type="project" value="UniProtKB-UniRule"/>
</dbReference>
<dbReference type="GO" id="GO:0000287">
    <property type="term" value="F:magnesium ion binding"/>
    <property type="evidence" value="ECO:0007669"/>
    <property type="project" value="UniProtKB-UniRule"/>
</dbReference>
<dbReference type="GO" id="GO:0004826">
    <property type="term" value="F:phenylalanine-tRNA ligase activity"/>
    <property type="evidence" value="ECO:0007669"/>
    <property type="project" value="UniProtKB-UniRule"/>
</dbReference>
<dbReference type="GO" id="GO:0000049">
    <property type="term" value="F:tRNA binding"/>
    <property type="evidence" value="ECO:0007669"/>
    <property type="project" value="InterPro"/>
</dbReference>
<dbReference type="GO" id="GO:0006432">
    <property type="term" value="P:phenylalanyl-tRNA aminoacylation"/>
    <property type="evidence" value="ECO:0007669"/>
    <property type="project" value="UniProtKB-UniRule"/>
</dbReference>
<dbReference type="CDD" id="cd00496">
    <property type="entry name" value="PheRS_alpha_core"/>
    <property type="match status" value="1"/>
</dbReference>
<dbReference type="FunFam" id="3.30.930.10:FF:000003">
    <property type="entry name" value="Phenylalanine--tRNA ligase alpha subunit"/>
    <property type="match status" value="1"/>
</dbReference>
<dbReference type="Gene3D" id="3.30.930.10">
    <property type="entry name" value="Bira Bifunctional Protein, Domain 2"/>
    <property type="match status" value="1"/>
</dbReference>
<dbReference type="HAMAP" id="MF_00281">
    <property type="entry name" value="Phe_tRNA_synth_alpha1"/>
    <property type="match status" value="1"/>
</dbReference>
<dbReference type="InterPro" id="IPR006195">
    <property type="entry name" value="aa-tRNA-synth_II"/>
</dbReference>
<dbReference type="InterPro" id="IPR045864">
    <property type="entry name" value="aa-tRNA-synth_II/BPL/LPL"/>
</dbReference>
<dbReference type="InterPro" id="IPR004529">
    <property type="entry name" value="Phe-tRNA-synth_IIc_asu"/>
</dbReference>
<dbReference type="InterPro" id="IPR004188">
    <property type="entry name" value="Phe-tRNA_ligase_II_N"/>
</dbReference>
<dbReference type="InterPro" id="IPR022911">
    <property type="entry name" value="Phe_tRNA_ligase_alpha1_bac"/>
</dbReference>
<dbReference type="InterPro" id="IPR002319">
    <property type="entry name" value="Phenylalanyl-tRNA_Synthase"/>
</dbReference>
<dbReference type="InterPro" id="IPR010978">
    <property type="entry name" value="tRNA-bd_arm"/>
</dbReference>
<dbReference type="NCBIfam" id="TIGR00468">
    <property type="entry name" value="pheS"/>
    <property type="match status" value="1"/>
</dbReference>
<dbReference type="PANTHER" id="PTHR11538:SF41">
    <property type="entry name" value="PHENYLALANINE--TRNA LIGASE, MITOCHONDRIAL"/>
    <property type="match status" value="1"/>
</dbReference>
<dbReference type="PANTHER" id="PTHR11538">
    <property type="entry name" value="PHENYLALANYL-TRNA SYNTHETASE"/>
    <property type="match status" value="1"/>
</dbReference>
<dbReference type="Pfam" id="PF02912">
    <property type="entry name" value="Phe_tRNA-synt_N"/>
    <property type="match status" value="1"/>
</dbReference>
<dbReference type="Pfam" id="PF01409">
    <property type="entry name" value="tRNA-synt_2d"/>
    <property type="match status" value="1"/>
</dbReference>
<dbReference type="SUPFAM" id="SSF55681">
    <property type="entry name" value="Class II aaRS and biotin synthetases"/>
    <property type="match status" value="1"/>
</dbReference>
<dbReference type="SUPFAM" id="SSF46589">
    <property type="entry name" value="tRNA-binding arm"/>
    <property type="match status" value="1"/>
</dbReference>
<dbReference type="PROSITE" id="PS50862">
    <property type="entry name" value="AA_TRNA_LIGASE_II"/>
    <property type="match status" value="1"/>
</dbReference>
<comment type="catalytic activity">
    <reaction evidence="1">
        <text>tRNA(Phe) + L-phenylalanine + ATP = L-phenylalanyl-tRNA(Phe) + AMP + diphosphate + H(+)</text>
        <dbReference type="Rhea" id="RHEA:19413"/>
        <dbReference type="Rhea" id="RHEA-COMP:9668"/>
        <dbReference type="Rhea" id="RHEA-COMP:9699"/>
        <dbReference type="ChEBI" id="CHEBI:15378"/>
        <dbReference type="ChEBI" id="CHEBI:30616"/>
        <dbReference type="ChEBI" id="CHEBI:33019"/>
        <dbReference type="ChEBI" id="CHEBI:58095"/>
        <dbReference type="ChEBI" id="CHEBI:78442"/>
        <dbReference type="ChEBI" id="CHEBI:78531"/>
        <dbReference type="ChEBI" id="CHEBI:456215"/>
        <dbReference type="EC" id="6.1.1.20"/>
    </reaction>
</comment>
<comment type="cofactor">
    <cofactor evidence="1">
        <name>Mg(2+)</name>
        <dbReference type="ChEBI" id="CHEBI:18420"/>
    </cofactor>
    <text evidence="1">Binds 2 magnesium ions per tetramer.</text>
</comment>
<comment type="subunit">
    <text evidence="1">Tetramer of two alpha and two beta subunits.</text>
</comment>
<comment type="subcellular location">
    <subcellularLocation>
        <location evidence="1">Cytoplasm</location>
    </subcellularLocation>
</comment>
<comment type="similarity">
    <text evidence="1">Belongs to the class-II aminoacyl-tRNA synthetase family. Phe-tRNA synthetase alpha subunit type 1 subfamily.</text>
</comment>
<proteinExistence type="inferred from homology"/>
<protein>
    <recommendedName>
        <fullName evidence="1">Phenylalanine--tRNA ligase alpha subunit</fullName>
        <ecNumber evidence="1">6.1.1.20</ecNumber>
    </recommendedName>
    <alternativeName>
        <fullName evidence="1">Phenylalanyl-tRNA synthetase alpha subunit</fullName>
        <shortName evidence="1">PheRS</shortName>
    </alternativeName>
</protein>
<accession>A9H167</accession>
<accession>B5ZJM1</accession>
<gene>
    <name evidence="1" type="primary">pheS</name>
    <name type="ordered locus">GDI3272</name>
    <name type="ordered locus">Gdia_3093</name>
</gene>
<keyword id="KW-0030">Aminoacyl-tRNA synthetase</keyword>
<keyword id="KW-0067">ATP-binding</keyword>
<keyword id="KW-0963">Cytoplasm</keyword>
<keyword id="KW-0436">Ligase</keyword>
<keyword id="KW-0460">Magnesium</keyword>
<keyword id="KW-0479">Metal-binding</keyword>
<keyword id="KW-0547">Nucleotide-binding</keyword>
<keyword id="KW-0648">Protein biosynthesis</keyword>
<keyword id="KW-1185">Reference proteome</keyword>
<reference key="1">
    <citation type="journal article" date="2009" name="BMC Genomics">
        <title>Complete genome sequence of the sugarcane nitrogen-fixing endophyte Gluconacetobacter diazotrophicus Pal5.</title>
        <authorList>
            <person name="Bertalan M."/>
            <person name="Albano R."/>
            <person name="de Padua V."/>
            <person name="Rouws L."/>
            <person name="Rojas C."/>
            <person name="Hemerly A."/>
            <person name="Teixeira K."/>
            <person name="Schwab S."/>
            <person name="Araujo J."/>
            <person name="Oliveira A."/>
            <person name="Franca L."/>
            <person name="Magalhaes V."/>
            <person name="Alqueres S."/>
            <person name="Cardoso A."/>
            <person name="Almeida W."/>
            <person name="Loureiro M.M."/>
            <person name="Nogueira E."/>
            <person name="Cidade D."/>
            <person name="Oliveira D."/>
            <person name="Simao T."/>
            <person name="Macedo J."/>
            <person name="Valadao A."/>
            <person name="Dreschsel M."/>
            <person name="Freitas F."/>
            <person name="Vidal M."/>
            <person name="Guedes H."/>
            <person name="Rodrigues E."/>
            <person name="Meneses C."/>
            <person name="Brioso P."/>
            <person name="Pozzer L."/>
            <person name="Figueiredo D."/>
            <person name="Montano H."/>
            <person name="Junior J."/>
            <person name="de Souza Filho G."/>
            <person name="Martin Quintana Flores V."/>
            <person name="Ferreira B."/>
            <person name="Branco A."/>
            <person name="Gonzalez P."/>
            <person name="Guillobel H."/>
            <person name="Lemos M."/>
            <person name="Seibel L."/>
            <person name="Macedo J."/>
            <person name="Alves-Ferreira M."/>
            <person name="Sachetto-Martins G."/>
            <person name="Coelho A."/>
            <person name="Santos E."/>
            <person name="Amaral G."/>
            <person name="Neves A."/>
            <person name="Pacheco A.B."/>
            <person name="Carvalho D."/>
            <person name="Lery L."/>
            <person name="Bisch P."/>
            <person name="Rossle S.C."/>
            <person name="Urmenyi T."/>
            <person name="Rael Pereira A."/>
            <person name="Silva R."/>
            <person name="Rondinelli E."/>
            <person name="von Kruger W."/>
            <person name="Martins O."/>
            <person name="Baldani J.I."/>
            <person name="Ferreira P.C."/>
        </authorList>
    </citation>
    <scope>NUCLEOTIDE SEQUENCE [LARGE SCALE GENOMIC DNA]</scope>
    <source>
        <strain>ATCC 49037 / DSM 5601 / CCUG 37298 / CIP 103539 / LMG 7603 / PAl5</strain>
    </source>
</reference>
<reference key="2">
    <citation type="journal article" date="2010" name="Stand. Genomic Sci.">
        <title>Two genome sequences of the same bacterial strain, Gluconacetobacter diazotrophicus PAl 5, suggest a new standard in genome sequence submission.</title>
        <authorList>
            <person name="Giongo A."/>
            <person name="Tyler H.L."/>
            <person name="Zipperer U.N."/>
            <person name="Triplett E.W."/>
        </authorList>
    </citation>
    <scope>NUCLEOTIDE SEQUENCE [LARGE SCALE GENOMIC DNA]</scope>
    <source>
        <strain>ATCC 49037 / DSM 5601 / CCUG 37298 / CIP 103539 / LMG 7603 / PAl5</strain>
    </source>
</reference>
<sequence>MSDDLETLRQETLAALAAATDRREWDAVRVGTLGKSGRLTALLKELGRMTPEARKLRGAAVNRLRDDLTREIEARGAEIESAILNARLAAERVDVTLPVRPESSGAIHPISRTMEEMAAIFGAMGFKVAEGPDIETDWHNFSALNTPDHHPARTDQDTFYLPAREGTSQERVLRTQTSGVQIRTMLGEEPPIRIIAPGRTYRADHDATHSPMFHQCEGLVIDRGITLAHLKGCLTDFLRAYFGNPDLPVRFRASYFPFTEPSMEVDIGWSRKSGEIGGGDDWLEVLGSGMVHPRVLANCGLDPREWQGFAFGMGIERLTMLRHGIPDLRSFYESDVRWLRHYGASPLSPALLHEGL</sequence>
<evidence type="ECO:0000255" key="1">
    <source>
        <dbReference type="HAMAP-Rule" id="MF_00281"/>
    </source>
</evidence>
<evidence type="ECO:0000305" key="2"/>
<feature type="chain" id="PRO_1000078841" description="Phenylalanine--tRNA ligase alpha subunit">
    <location>
        <begin position="1"/>
        <end position="356"/>
    </location>
</feature>
<feature type="binding site" evidence="1">
    <location>
        <position position="260"/>
    </location>
    <ligand>
        <name>Mg(2+)</name>
        <dbReference type="ChEBI" id="CHEBI:18420"/>
        <note>shared with beta subunit</note>
    </ligand>
</feature>
<feature type="sequence conflict" description="In Ref. 2; ACI52823." evidence="2" ref="2">
    <original>P</original>
    <variation>L</variation>
    <location>
        <position position="248"/>
    </location>
</feature>
<feature type="sequence conflict" description="In Ref. 2; ACI52823." evidence="2" ref="2">
    <original>D</original>
    <variation>G</variation>
    <location>
        <position position="280"/>
    </location>
</feature>